<evidence type="ECO:0000305" key="1"/>
<geneLocation type="chloroplast"/>
<gene>
    <name type="primary">ycf68-1</name>
</gene>
<gene>
    <name type="primary">ycf68-2</name>
</gene>
<protein>
    <recommendedName>
        <fullName>Uncharacterized protein ycf68</fullName>
    </recommendedName>
</protein>
<name>YCF68_ORYSA</name>
<accession>P0C304</accession>
<proteinExistence type="inferred from homology"/>
<dbReference type="EMBL" id="AY522331">
    <property type="status" value="NOT_ANNOTATED_CDS"/>
    <property type="molecule type" value="Genomic_DNA"/>
</dbReference>
<dbReference type="GO" id="GO:0009507">
    <property type="term" value="C:chloroplast"/>
    <property type="evidence" value="ECO:0007669"/>
    <property type="project" value="UniProtKB-SubCell"/>
</dbReference>
<dbReference type="GO" id="GO:0009536">
    <property type="term" value="C:plastid"/>
    <property type="evidence" value="ECO:0000305"/>
    <property type="project" value="Gramene"/>
</dbReference>
<dbReference type="InterPro" id="IPR022546">
    <property type="entry name" value="Uncharacterised_Ycf68"/>
</dbReference>
<dbReference type="PANTHER" id="PTHR34890">
    <property type="entry name" value="ORF16-LACZ FUSION PROTEIN-RELATED"/>
    <property type="match status" value="1"/>
</dbReference>
<dbReference type="Pfam" id="PF10839">
    <property type="entry name" value="DUF2647"/>
    <property type="match status" value="1"/>
</dbReference>
<organism>
    <name type="scientific">Oryza sativa</name>
    <name type="common">Rice</name>
    <dbReference type="NCBI Taxonomy" id="4530"/>
    <lineage>
        <taxon>Eukaryota</taxon>
        <taxon>Viridiplantae</taxon>
        <taxon>Streptophyta</taxon>
        <taxon>Embryophyta</taxon>
        <taxon>Tracheophyta</taxon>
        <taxon>Spermatophyta</taxon>
        <taxon>Magnoliopsida</taxon>
        <taxon>Liliopsida</taxon>
        <taxon>Poales</taxon>
        <taxon>Poaceae</taxon>
        <taxon>BOP clade</taxon>
        <taxon>Oryzoideae</taxon>
        <taxon>Oryzeae</taxon>
        <taxon>Oryzinae</taxon>
        <taxon>Oryza</taxon>
    </lineage>
</organism>
<feature type="chain" id="PRO_0000288618" description="Uncharacterized protein ycf68">
    <location>
        <begin position="1"/>
        <end position="133"/>
    </location>
</feature>
<keyword id="KW-0150">Chloroplast</keyword>
<keyword id="KW-0934">Plastid</keyword>
<comment type="subcellular location">
    <subcellularLocation>
        <location>Plastid</location>
        <location>Chloroplast</location>
    </subcellularLocation>
</comment>
<comment type="similarity">
    <text evidence="1">Belongs to the ycf68 family.</text>
</comment>
<reference key="1">
    <citation type="journal article" date="2004" name="Plant Physiol.">
        <title>A comparison of rice chloroplast genomes.</title>
        <authorList>
            <person name="Tang J."/>
            <person name="Xia H."/>
            <person name="Cao M."/>
            <person name="Zhang X."/>
            <person name="Zeng W."/>
            <person name="Hu S."/>
            <person name="Tong W."/>
            <person name="Wang J."/>
            <person name="Wang J."/>
            <person name="Yu J."/>
            <person name="Yang H."/>
            <person name="Zhu L."/>
        </authorList>
    </citation>
    <scope>NUCLEOTIDE SEQUENCE [LARGE SCALE GENOMIC DNA]</scope>
    <source>
        <strain>cv. PA64s</strain>
    </source>
</reference>
<sequence length="133" mass="14576">MAYSSCLNRSLKPNKLLLRRIDGAIQVRSHVDLTFYSLVGSGRSGGGTTAPLFSRIHTSLISVWRAISRAQVEVRPQWENGAPNNASSQTKNYEITLSFWGDGGIVPFEPFFHAFPGGLEKAAINRTSLILPS</sequence>